<gene>
    <name evidence="1" type="primary">efp</name>
    <name type="ordered locus">Rleg2_3799</name>
</gene>
<sequence>MVKVIASSVRKGNVLDVDGKLYVVLTAQNFHPGKGTPVTQVDMRRIVDGVKVSERWRTTEQVERAFVEDVSFQYLYEDGEGFHFMNPGNYDQVVVDVETMGDQKAYLQEGMSCILSIHEGIPLALELPRHVTLEITETEPVVKGQTASSSYKPAMLSNGVRTMVPPHINAGTRVVIATEDNSYVERAKD</sequence>
<name>EFP_RHILW</name>
<proteinExistence type="inferred from homology"/>
<comment type="function">
    <text evidence="1">Involved in peptide bond synthesis. Stimulates efficient translation and peptide-bond synthesis on native or reconstituted 70S ribosomes in vitro. Probably functions indirectly by altering the affinity of the ribosome for aminoacyl-tRNA, thus increasing their reactivity as acceptors for peptidyl transferase.</text>
</comment>
<comment type="pathway">
    <text evidence="1">Protein biosynthesis; polypeptide chain elongation.</text>
</comment>
<comment type="subcellular location">
    <subcellularLocation>
        <location evidence="1">Cytoplasm</location>
    </subcellularLocation>
</comment>
<comment type="similarity">
    <text evidence="1">Belongs to the elongation factor P family.</text>
</comment>
<organism>
    <name type="scientific">Rhizobium leguminosarum bv. trifolii (strain WSM2304)</name>
    <dbReference type="NCBI Taxonomy" id="395492"/>
    <lineage>
        <taxon>Bacteria</taxon>
        <taxon>Pseudomonadati</taxon>
        <taxon>Pseudomonadota</taxon>
        <taxon>Alphaproteobacteria</taxon>
        <taxon>Hyphomicrobiales</taxon>
        <taxon>Rhizobiaceae</taxon>
        <taxon>Rhizobium/Agrobacterium group</taxon>
        <taxon>Rhizobium</taxon>
    </lineage>
</organism>
<protein>
    <recommendedName>
        <fullName evidence="1">Elongation factor P</fullName>
        <shortName evidence="1">EF-P</shortName>
    </recommendedName>
</protein>
<dbReference type="EMBL" id="CP001191">
    <property type="protein sequence ID" value="ACI57061.1"/>
    <property type="molecule type" value="Genomic_DNA"/>
</dbReference>
<dbReference type="RefSeq" id="WP_003589676.1">
    <property type="nucleotide sequence ID" value="NC_011369.1"/>
</dbReference>
<dbReference type="SMR" id="B5ZU68"/>
<dbReference type="STRING" id="395492.Rleg2_3799"/>
<dbReference type="KEGG" id="rlt:Rleg2_3799"/>
<dbReference type="eggNOG" id="COG0231">
    <property type="taxonomic scope" value="Bacteria"/>
</dbReference>
<dbReference type="HOGENOM" id="CLU_074944_1_1_5"/>
<dbReference type="UniPathway" id="UPA00345"/>
<dbReference type="Proteomes" id="UP000008330">
    <property type="component" value="Chromosome"/>
</dbReference>
<dbReference type="GO" id="GO:0005737">
    <property type="term" value="C:cytoplasm"/>
    <property type="evidence" value="ECO:0007669"/>
    <property type="project" value="UniProtKB-SubCell"/>
</dbReference>
<dbReference type="GO" id="GO:0003746">
    <property type="term" value="F:translation elongation factor activity"/>
    <property type="evidence" value="ECO:0007669"/>
    <property type="project" value="UniProtKB-UniRule"/>
</dbReference>
<dbReference type="GO" id="GO:0043043">
    <property type="term" value="P:peptide biosynthetic process"/>
    <property type="evidence" value="ECO:0007669"/>
    <property type="project" value="InterPro"/>
</dbReference>
<dbReference type="CDD" id="cd04470">
    <property type="entry name" value="S1_EF-P_repeat_1"/>
    <property type="match status" value="1"/>
</dbReference>
<dbReference type="CDD" id="cd05794">
    <property type="entry name" value="S1_EF-P_repeat_2"/>
    <property type="match status" value="1"/>
</dbReference>
<dbReference type="FunFam" id="2.40.50.140:FF:000004">
    <property type="entry name" value="Elongation factor P"/>
    <property type="match status" value="1"/>
</dbReference>
<dbReference type="FunFam" id="2.40.50.140:FF:000009">
    <property type="entry name" value="Elongation factor P"/>
    <property type="match status" value="1"/>
</dbReference>
<dbReference type="Gene3D" id="2.30.30.30">
    <property type="match status" value="1"/>
</dbReference>
<dbReference type="Gene3D" id="2.40.50.140">
    <property type="entry name" value="Nucleic acid-binding proteins"/>
    <property type="match status" value="2"/>
</dbReference>
<dbReference type="HAMAP" id="MF_00141">
    <property type="entry name" value="EF_P"/>
    <property type="match status" value="1"/>
</dbReference>
<dbReference type="InterPro" id="IPR015365">
    <property type="entry name" value="Elong-fact-P_C"/>
</dbReference>
<dbReference type="InterPro" id="IPR012340">
    <property type="entry name" value="NA-bd_OB-fold"/>
</dbReference>
<dbReference type="InterPro" id="IPR014722">
    <property type="entry name" value="Rib_uL2_dom2"/>
</dbReference>
<dbReference type="InterPro" id="IPR020599">
    <property type="entry name" value="Transl_elong_fac_P/YeiP"/>
</dbReference>
<dbReference type="InterPro" id="IPR013185">
    <property type="entry name" value="Transl_elong_KOW-like"/>
</dbReference>
<dbReference type="InterPro" id="IPR001059">
    <property type="entry name" value="Transl_elong_P/YeiP_cen"/>
</dbReference>
<dbReference type="InterPro" id="IPR013852">
    <property type="entry name" value="Transl_elong_P/YeiP_CS"/>
</dbReference>
<dbReference type="InterPro" id="IPR011768">
    <property type="entry name" value="Transl_elongation_fac_P"/>
</dbReference>
<dbReference type="InterPro" id="IPR008991">
    <property type="entry name" value="Translation_prot_SH3-like_sf"/>
</dbReference>
<dbReference type="NCBIfam" id="TIGR00038">
    <property type="entry name" value="efp"/>
    <property type="match status" value="1"/>
</dbReference>
<dbReference type="NCBIfam" id="NF001810">
    <property type="entry name" value="PRK00529.1"/>
    <property type="match status" value="1"/>
</dbReference>
<dbReference type="PANTHER" id="PTHR30053">
    <property type="entry name" value="ELONGATION FACTOR P"/>
    <property type="match status" value="1"/>
</dbReference>
<dbReference type="PANTHER" id="PTHR30053:SF14">
    <property type="entry name" value="TRANSLATION ELONGATION FACTOR KOW-LIKE DOMAIN-CONTAINING PROTEIN"/>
    <property type="match status" value="1"/>
</dbReference>
<dbReference type="Pfam" id="PF01132">
    <property type="entry name" value="EFP"/>
    <property type="match status" value="1"/>
</dbReference>
<dbReference type="Pfam" id="PF08207">
    <property type="entry name" value="EFP_N"/>
    <property type="match status" value="1"/>
</dbReference>
<dbReference type="Pfam" id="PF09285">
    <property type="entry name" value="Elong-fact-P_C"/>
    <property type="match status" value="1"/>
</dbReference>
<dbReference type="PIRSF" id="PIRSF005901">
    <property type="entry name" value="EF-P"/>
    <property type="match status" value="1"/>
</dbReference>
<dbReference type="SMART" id="SM01185">
    <property type="entry name" value="EFP"/>
    <property type="match status" value="1"/>
</dbReference>
<dbReference type="SMART" id="SM00841">
    <property type="entry name" value="Elong-fact-P_C"/>
    <property type="match status" value="1"/>
</dbReference>
<dbReference type="SUPFAM" id="SSF50249">
    <property type="entry name" value="Nucleic acid-binding proteins"/>
    <property type="match status" value="2"/>
</dbReference>
<dbReference type="SUPFAM" id="SSF50104">
    <property type="entry name" value="Translation proteins SH3-like domain"/>
    <property type="match status" value="1"/>
</dbReference>
<dbReference type="PROSITE" id="PS01275">
    <property type="entry name" value="EFP"/>
    <property type="match status" value="1"/>
</dbReference>
<feature type="chain" id="PRO_1000096194" description="Elongation factor P">
    <location>
        <begin position="1"/>
        <end position="189"/>
    </location>
</feature>
<evidence type="ECO:0000255" key="1">
    <source>
        <dbReference type="HAMAP-Rule" id="MF_00141"/>
    </source>
</evidence>
<keyword id="KW-0963">Cytoplasm</keyword>
<keyword id="KW-0251">Elongation factor</keyword>
<keyword id="KW-0648">Protein biosynthesis</keyword>
<keyword id="KW-1185">Reference proteome</keyword>
<reference key="1">
    <citation type="journal article" date="2010" name="Stand. Genomic Sci.">
        <title>Complete genome sequence of Rhizobium leguminosarum bv trifolii strain WSM2304, an effective microsymbiont of the South American clover Trifolium polymorphum.</title>
        <authorList>
            <person name="Reeve W."/>
            <person name="O'Hara G."/>
            <person name="Chain P."/>
            <person name="Ardley J."/>
            <person name="Brau L."/>
            <person name="Nandesena K."/>
            <person name="Tiwari R."/>
            <person name="Malfatti S."/>
            <person name="Kiss H."/>
            <person name="Lapidus A."/>
            <person name="Copeland A."/>
            <person name="Nolan M."/>
            <person name="Land M."/>
            <person name="Ivanova N."/>
            <person name="Mavromatis K."/>
            <person name="Markowitz V."/>
            <person name="Kyrpides N."/>
            <person name="Melino V."/>
            <person name="Denton M."/>
            <person name="Yates R."/>
            <person name="Howieson J."/>
        </authorList>
    </citation>
    <scope>NUCLEOTIDE SEQUENCE [LARGE SCALE GENOMIC DNA]</scope>
    <source>
        <strain>WSM2304</strain>
    </source>
</reference>
<accession>B5ZU68</accession>